<dbReference type="EMBL" id="BC085954">
    <property type="protein sequence ID" value="AAH85954.1"/>
    <property type="molecule type" value="mRNA"/>
</dbReference>
<dbReference type="RefSeq" id="NP_001008286.1">
    <property type="nucleotide sequence ID" value="NM_001008285.1"/>
</dbReference>
<dbReference type="RefSeq" id="XP_006248394.1">
    <property type="nucleotide sequence ID" value="XM_006248332.5"/>
</dbReference>
<dbReference type="RefSeq" id="XP_017453413.1">
    <property type="nucleotide sequence ID" value="XM_017597924.1"/>
</dbReference>
<dbReference type="RefSeq" id="XP_063126461.1">
    <property type="nucleotide sequence ID" value="XM_063270391.1"/>
</dbReference>
<dbReference type="SMR" id="Q5RKG1"/>
<dbReference type="FunCoup" id="Q5RKG1">
    <property type="interactions" value="2128"/>
</dbReference>
<dbReference type="STRING" id="10116.ENSRNOP00000061013"/>
<dbReference type="iPTMnet" id="Q5RKG1"/>
<dbReference type="PhosphoSitePlus" id="Q5RKG1"/>
<dbReference type="PaxDb" id="10116-ENSRNOP00000061013"/>
<dbReference type="Ensembl" id="ENSRNOT00000064385.2">
    <property type="protein sequence ID" value="ENSRNOP00000061013.1"/>
    <property type="gene ID" value="ENSRNOG00000039024.5"/>
</dbReference>
<dbReference type="GeneID" id="288111"/>
<dbReference type="KEGG" id="rno:288111"/>
<dbReference type="UCSC" id="RGD:1310729">
    <property type="organism name" value="rat"/>
</dbReference>
<dbReference type="AGR" id="RGD:1310729"/>
<dbReference type="CTD" id="152185"/>
<dbReference type="RGD" id="1310729">
    <property type="gene designation" value="Spice1"/>
</dbReference>
<dbReference type="eggNOG" id="ENOG502QQ0H">
    <property type="taxonomic scope" value="Eukaryota"/>
</dbReference>
<dbReference type="GeneTree" id="ENSGT00390000006207"/>
<dbReference type="HOGENOM" id="CLU_016571_0_0_1"/>
<dbReference type="InParanoid" id="Q5RKG1"/>
<dbReference type="OMA" id="REQSPKH"/>
<dbReference type="OrthoDB" id="81566at9989"/>
<dbReference type="PhylomeDB" id="Q5RKG1"/>
<dbReference type="TreeFam" id="TF333301"/>
<dbReference type="PRO" id="PR:Q5RKG1"/>
<dbReference type="Proteomes" id="UP000002494">
    <property type="component" value="Chromosome 11"/>
</dbReference>
<dbReference type="Bgee" id="ENSRNOG00000039024">
    <property type="expression patterns" value="Expressed in testis and 19 other cell types or tissues"/>
</dbReference>
<dbReference type="ExpressionAtlas" id="Q5RKG1">
    <property type="expression patterns" value="baseline and differential"/>
</dbReference>
<dbReference type="GO" id="GO:0005814">
    <property type="term" value="C:centriole"/>
    <property type="evidence" value="ECO:0000250"/>
    <property type="project" value="UniProtKB"/>
</dbReference>
<dbReference type="GO" id="GO:0005813">
    <property type="term" value="C:centrosome"/>
    <property type="evidence" value="ECO:0000318"/>
    <property type="project" value="GO_Central"/>
</dbReference>
<dbReference type="GO" id="GO:0005737">
    <property type="term" value="C:cytoplasm"/>
    <property type="evidence" value="ECO:0007669"/>
    <property type="project" value="UniProtKB-KW"/>
</dbReference>
<dbReference type="GO" id="GO:0005819">
    <property type="term" value="C:spindle"/>
    <property type="evidence" value="ECO:0000250"/>
    <property type="project" value="UniProtKB"/>
</dbReference>
<dbReference type="GO" id="GO:0051301">
    <property type="term" value="P:cell division"/>
    <property type="evidence" value="ECO:0007669"/>
    <property type="project" value="UniProtKB-KW"/>
</dbReference>
<dbReference type="GO" id="GO:0051310">
    <property type="term" value="P:metaphase chromosome alignment"/>
    <property type="evidence" value="ECO:0000266"/>
    <property type="project" value="RGD"/>
</dbReference>
<dbReference type="GO" id="GO:0090307">
    <property type="term" value="P:mitotic spindle assembly"/>
    <property type="evidence" value="ECO:0000250"/>
    <property type="project" value="UniProtKB"/>
</dbReference>
<dbReference type="GO" id="GO:0046599">
    <property type="term" value="P:regulation of centriole replication"/>
    <property type="evidence" value="ECO:0000250"/>
    <property type="project" value="UniProtKB"/>
</dbReference>
<dbReference type="InterPro" id="IPR031387">
    <property type="entry name" value="SPICE1"/>
</dbReference>
<dbReference type="PANTHER" id="PTHR31167">
    <property type="entry name" value="SPINDLE AND CENTRIOLE ASSOCIATED PROTEIN 1 SPICE1"/>
    <property type="match status" value="1"/>
</dbReference>
<dbReference type="PANTHER" id="PTHR31167:SF3">
    <property type="entry name" value="SPINDLE AND CENTRIOLE-ASSOCIATED PROTEIN 1"/>
    <property type="match status" value="1"/>
</dbReference>
<dbReference type="Pfam" id="PF15678">
    <property type="entry name" value="SPICE"/>
    <property type="match status" value="1"/>
</dbReference>
<comment type="function">
    <text evidence="1">Regulator required for centriole duplication, for proper bipolar spindle formation and chromosome congression in mitosis.</text>
</comment>
<comment type="subunit">
    <text evidence="1">Interacts with CEP120.</text>
</comment>
<comment type="subcellular location">
    <subcellularLocation>
        <location evidence="1">Cytoplasm</location>
        <location evidence="1">Cytoskeleton</location>
        <location evidence="1">Microtubule organizing center</location>
        <location evidence="1">Centrosome</location>
        <location evidence="1">Centriole</location>
    </subcellularLocation>
    <subcellularLocation>
        <location evidence="1">Cytoplasm</location>
        <location evidence="1">Cytoskeleton</location>
        <location evidence="1">Spindle</location>
    </subcellularLocation>
</comment>
<feature type="chain" id="PRO_0000282416" description="Spindle and centriole-associated protein 1">
    <location>
        <begin position="1"/>
        <end position="868"/>
    </location>
</feature>
<feature type="region of interest" description="Disordered" evidence="5">
    <location>
        <begin position="129"/>
        <end position="154"/>
    </location>
</feature>
<feature type="region of interest" description="Disordered" evidence="5">
    <location>
        <begin position="172"/>
        <end position="201"/>
    </location>
</feature>
<feature type="region of interest" description="Disordered" evidence="5">
    <location>
        <begin position="229"/>
        <end position="250"/>
    </location>
</feature>
<feature type="region of interest" description="Disordered" evidence="5">
    <location>
        <begin position="291"/>
        <end position="326"/>
    </location>
</feature>
<feature type="region of interest" description="Disordered" evidence="5">
    <location>
        <begin position="630"/>
        <end position="664"/>
    </location>
</feature>
<feature type="region of interest" description="Disordered" evidence="5">
    <location>
        <begin position="702"/>
        <end position="722"/>
    </location>
</feature>
<feature type="region of interest" description="Disordered" evidence="5">
    <location>
        <begin position="805"/>
        <end position="868"/>
    </location>
</feature>
<feature type="coiled-coil region" evidence="4">
    <location>
        <begin position="381"/>
        <end position="434"/>
    </location>
</feature>
<feature type="coiled-coil region" evidence="4">
    <location>
        <begin position="736"/>
        <end position="764"/>
    </location>
</feature>
<feature type="compositionally biased region" description="Polar residues" evidence="5">
    <location>
        <begin position="190"/>
        <end position="200"/>
    </location>
</feature>
<feature type="compositionally biased region" description="Polar residues" evidence="5">
    <location>
        <begin position="229"/>
        <end position="245"/>
    </location>
</feature>
<feature type="compositionally biased region" description="Low complexity" evidence="5">
    <location>
        <begin position="315"/>
        <end position="326"/>
    </location>
</feature>
<feature type="compositionally biased region" description="Low complexity" evidence="5">
    <location>
        <begin position="634"/>
        <end position="649"/>
    </location>
</feature>
<feature type="compositionally biased region" description="Basic and acidic residues" evidence="5">
    <location>
        <begin position="706"/>
        <end position="715"/>
    </location>
</feature>
<feature type="compositionally biased region" description="Low complexity" evidence="5">
    <location>
        <begin position="812"/>
        <end position="831"/>
    </location>
</feature>
<feature type="modified residue" description="Phosphothreonine" evidence="3">
    <location>
        <position position="236"/>
    </location>
</feature>
<feature type="modified residue" description="Phosphoserine" evidence="2">
    <location>
        <position position="240"/>
    </location>
</feature>
<feature type="modified residue" description="Phosphoserine" evidence="3">
    <location>
        <position position="655"/>
    </location>
</feature>
<feature type="modified residue" description="Phosphoserine" evidence="3">
    <location>
        <position position="772"/>
    </location>
</feature>
<feature type="modified residue" description="Phosphoserine" evidence="6">
    <location>
        <position position="773"/>
    </location>
</feature>
<feature type="modified residue" description="Phosphoserine" evidence="6">
    <location>
        <position position="776"/>
    </location>
</feature>
<feature type="modified residue" description="Phosphoserine" evidence="2">
    <location>
        <position position="831"/>
    </location>
</feature>
<accession>Q5RKG1</accession>
<organism>
    <name type="scientific">Rattus norvegicus</name>
    <name type="common">Rat</name>
    <dbReference type="NCBI Taxonomy" id="10116"/>
    <lineage>
        <taxon>Eukaryota</taxon>
        <taxon>Metazoa</taxon>
        <taxon>Chordata</taxon>
        <taxon>Craniata</taxon>
        <taxon>Vertebrata</taxon>
        <taxon>Euteleostomi</taxon>
        <taxon>Mammalia</taxon>
        <taxon>Eutheria</taxon>
        <taxon>Euarchontoglires</taxon>
        <taxon>Glires</taxon>
        <taxon>Rodentia</taxon>
        <taxon>Myomorpha</taxon>
        <taxon>Muroidea</taxon>
        <taxon>Muridae</taxon>
        <taxon>Murinae</taxon>
        <taxon>Rattus</taxon>
    </lineage>
</organism>
<gene>
    <name type="primary">Spice1</name>
    <name type="synonym">Ccdc52</name>
</gene>
<keyword id="KW-0131">Cell cycle</keyword>
<keyword id="KW-0132">Cell division</keyword>
<keyword id="KW-0175">Coiled coil</keyword>
<keyword id="KW-0963">Cytoplasm</keyword>
<keyword id="KW-0206">Cytoskeleton</keyword>
<keyword id="KW-0498">Mitosis</keyword>
<keyword id="KW-0597">Phosphoprotein</keyword>
<keyword id="KW-1185">Reference proteome</keyword>
<name>SPICE_RAT</name>
<reference key="1">
    <citation type="journal article" date="2004" name="Genome Res.">
        <title>The status, quality, and expansion of the NIH full-length cDNA project: the Mammalian Gene Collection (MGC).</title>
        <authorList>
            <consortium name="The MGC Project Team"/>
        </authorList>
    </citation>
    <scope>NUCLEOTIDE SEQUENCE [LARGE SCALE MRNA]</scope>
    <source>
        <tissue>Testis</tissue>
    </source>
</reference>
<reference key="2">
    <citation type="journal article" date="2012" name="Nat. Commun.">
        <title>Quantitative maps of protein phosphorylation sites across 14 different rat organs and tissues.</title>
        <authorList>
            <person name="Lundby A."/>
            <person name="Secher A."/>
            <person name="Lage K."/>
            <person name="Nordsborg N.B."/>
            <person name="Dmytriyev A."/>
            <person name="Lundby C."/>
            <person name="Olsen J.V."/>
        </authorList>
    </citation>
    <scope>PHOSPHORYLATION [LARGE SCALE ANALYSIS] AT SER-773 AND SER-776</scope>
    <scope>IDENTIFICATION BY MASS SPECTROMETRY [LARGE SCALE ANALYSIS]</scope>
</reference>
<sequence length="868" mass="96322">MSLIRVNRFGPRGGARKTLKVKKKAAVRQEWDNTVNDLTVHRATPEDLVRRHEMHKSKNRALVHWELQEKALKRKWKKQKPETSSIEKRKLSIMKEILSDQYQTQDVLEKSDHLLTAAKGLFVDVPRKRTGFPNVTMAPGSSRSPAGINQDPGTQSILNESIIEPQALNEVDDGGAESTAHSQSEDSESELPNSLSPHSNRNTERFLHQLKEENSELINQLWTDIQQKIAAQSQRTPPGSPSSELSAEDQKGALNATDAVKRIQAGLQPEESAEPVDSSYVGQVLNTRKPKPLLSKVKRKQDMRALSKQKKNMLSSSTTSADLASSNNSSLDVLKHMIHEVEHEMEEYERWTGREVKGLQGGQGLTGFTLSLVSSLCRLVRYLKESETQLRKEVETRQQLEQMLGDHRELIDALTAEILLLREENGAVQARLQQYMVTTDEQLISLTHAIKSCPVINNSRQESQAPERAAMGRRLVDNVGAPVVNSNVSMPLMLKGEEMVDFPQEELPVKLSQGPPPTENLNLASNFPTHIFEPAVMLTPPRQKSNSEFSPLQDVLRRTVQTRPAPRIPPTVEVIEKEQTWEKKNLPIDPDIQNSSEESRLFTQRWRVSHMGDDLENKSQPQFVSLSQPPQFVSLSQPPCSSPPSTQQSRNPVFSEEPTVLGDGQQLGTADALMHRKDIMARIAELTLQNSAMKAHLNNITSSGGEHGDGLREPSRQGNASEVPANFPAVQSLMPSSMEERIAELNRQSMEARSKLLQLIEQQKLVGLTLSSSPVSPVESPLRAWTEEGKRTIEVSVPGVEASESSKCNTVSPVSGVSSRRSSGAISNSCSPLNATSGSGKFTPVNPRTKQTEKQSEEGWFALSAHLP</sequence>
<evidence type="ECO:0000250" key="1"/>
<evidence type="ECO:0000250" key="2">
    <source>
        <dbReference type="UniProtKB" id="Q8C804"/>
    </source>
</evidence>
<evidence type="ECO:0000250" key="3">
    <source>
        <dbReference type="UniProtKB" id="Q8N0Z3"/>
    </source>
</evidence>
<evidence type="ECO:0000255" key="4"/>
<evidence type="ECO:0000256" key="5">
    <source>
        <dbReference type="SAM" id="MobiDB-lite"/>
    </source>
</evidence>
<evidence type="ECO:0007744" key="6">
    <source>
    </source>
</evidence>
<proteinExistence type="evidence at protein level"/>
<protein>
    <recommendedName>
        <fullName>Spindle and centriole-associated protein 1</fullName>
    </recommendedName>
    <alternativeName>
        <fullName>Coiled-coil domain-containing protein 52</fullName>
    </alternativeName>
</protein>